<proteinExistence type="inferred from homology"/>
<protein>
    <recommendedName>
        <fullName>Dihydrolipoyllysine-residue succinyltransferase component of 2-oxoglutarate dehydrogenase complex</fullName>
        <ecNumber evidence="2">2.3.1.61</ecNumber>
    </recommendedName>
    <alternativeName>
        <fullName>2-oxoglutarate dehydrogenase complex component E2</fullName>
        <shortName>OGDC-E2</shortName>
    </alternativeName>
    <alternativeName>
        <fullName>Dihydrolipoamide succinyltransferase component of 2-oxoglutarate dehydrogenase complex</fullName>
    </alternativeName>
</protein>
<accession>P52993</accession>
<accession>Q0K9A1</accession>
<feature type="chain" id="PRO_0000162253" description="Dihydrolipoyllysine-residue succinyltransferase component of 2-oxoglutarate dehydrogenase complex">
    <location>
        <begin position="1"/>
        <end position="416"/>
    </location>
</feature>
<feature type="domain" description="Lipoyl-binding" evidence="3">
    <location>
        <begin position="3"/>
        <end position="78"/>
    </location>
</feature>
<feature type="domain" description="Peripheral subunit-binding (PSBD)" evidence="4">
    <location>
        <begin position="115"/>
        <end position="152"/>
    </location>
</feature>
<feature type="active site" evidence="2">
    <location>
        <position position="387"/>
    </location>
</feature>
<feature type="active site" evidence="2">
    <location>
        <position position="391"/>
    </location>
</feature>
<feature type="modified residue" description="N6-lipoyllysine" evidence="3">
    <location>
        <position position="44"/>
    </location>
</feature>
<name>ODO2_CUPNH</name>
<gene>
    <name type="primary">sucB</name>
    <name type="synonym">odhB</name>
    <name type="ordered locus">H16_A2324</name>
</gene>
<dbReference type="EC" id="2.3.1.61" evidence="2"/>
<dbReference type="EMBL" id="X91877">
    <property type="protein sequence ID" value="CAA62981.1"/>
    <property type="molecule type" value="Genomic_DNA"/>
</dbReference>
<dbReference type="EMBL" id="AM260479">
    <property type="protein sequence ID" value="CAJ93420.1"/>
    <property type="molecule type" value="Genomic_DNA"/>
</dbReference>
<dbReference type="PIR" id="T44423">
    <property type="entry name" value="T44423"/>
</dbReference>
<dbReference type="RefSeq" id="WP_010809465.1">
    <property type="nucleotide sequence ID" value="NZ_CP039287.1"/>
</dbReference>
<dbReference type="SMR" id="P52993"/>
<dbReference type="STRING" id="381666.H16_A2324"/>
<dbReference type="KEGG" id="reh:H16_A2324"/>
<dbReference type="eggNOG" id="COG0508">
    <property type="taxonomic scope" value="Bacteria"/>
</dbReference>
<dbReference type="HOGENOM" id="CLU_016733_0_0_4"/>
<dbReference type="OrthoDB" id="9805770at2"/>
<dbReference type="UniPathway" id="UPA00868">
    <property type="reaction ID" value="UER00840"/>
</dbReference>
<dbReference type="Proteomes" id="UP000008210">
    <property type="component" value="Chromosome 1"/>
</dbReference>
<dbReference type="GO" id="GO:0005829">
    <property type="term" value="C:cytosol"/>
    <property type="evidence" value="ECO:0007669"/>
    <property type="project" value="TreeGrafter"/>
</dbReference>
<dbReference type="GO" id="GO:0045252">
    <property type="term" value="C:oxoglutarate dehydrogenase complex"/>
    <property type="evidence" value="ECO:0007669"/>
    <property type="project" value="InterPro"/>
</dbReference>
<dbReference type="GO" id="GO:0004149">
    <property type="term" value="F:dihydrolipoyllysine-residue succinyltransferase activity"/>
    <property type="evidence" value="ECO:0007669"/>
    <property type="project" value="UniProtKB-EC"/>
</dbReference>
<dbReference type="GO" id="GO:0033512">
    <property type="term" value="P:L-lysine catabolic process to acetyl-CoA via saccharopine"/>
    <property type="evidence" value="ECO:0007669"/>
    <property type="project" value="UniProtKB-UniPathway"/>
</dbReference>
<dbReference type="GO" id="GO:0006099">
    <property type="term" value="P:tricarboxylic acid cycle"/>
    <property type="evidence" value="ECO:0007669"/>
    <property type="project" value="UniProtKB-KW"/>
</dbReference>
<dbReference type="CDD" id="cd06849">
    <property type="entry name" value="lipoyl_domain"/>
    <property type="match status" value="1"/>
</dbReference>
<dbReference type="FunFam" id="3.30.559.10:FF:000007">
    <property type="entry name" value="Dihydrolipoamide acetyltransferase component of pyruvate dehydrogenase complex"/>
    <property type="match status" value="1"/>
</dbReference>
<dbReference type="Gene3D" id="2.40.50.100">
    <property type="match status" value="1"/>
</dbReference>
<dbReference type="Gene3D" id="3.30.559.10">
    <property type="entry name" value="Chloramphenicol acetyltransferase-like domain"/>
    <property type="match status" value="1"/>
</dbReference>
<dbReference type="Gene3D" id="4.10.320.10">
    <property type="entry name" value="E3-binding domain"/>
    <property type="match status" value="1"/>
</dbReference>
<dbReference type="InterPro" id="IPR003016">
    <property type="entry name" value="2-oxoA_DH_lipoyl-BS"/>
</dbReference>
<dbReference type="InterPro" id="IPR050537">
    <property type="entry name" value="2-oxoacid_dehydrogenase"/>
</dbReference>
<dbReference type="InterPro" id="IPR001078">
    <property type="entry name" value="2-oxoacid_DH_actylTfrase"/>
</dbReference>
<dbReference type="InterPro" id="IPR000089">
    <property type="entry name" value="Biotin_lipoyl"/>
</dbReference>
<dbReference type="InterPro" id="IPR023213">
    <property type="entry name" value="CAT-like_dom_sf"/>
</dbReference>
<dbReference type="InterPro" id="IPR036625">
    <property type="entry name" value="E3-bd_dom_sf"/>
</dbReference>
<dbReference type="InterPro" id="IPR004167">
    <property type="entry name" value="PSBD"/>
</dbReference>
<dbReference type="InterPro" id="IPR011053">
    <property type="entry name" value="Single_hybrid_motif"/>
</dbReference>
<dbReference type="InterPro" id="IPR006255">
    <property type="entry name" value="SucB"/>
</dbReference>
<dbReference type="NCBIfam" id="NF004309">
    <property type="entry name" value="PRK05704.1"/>
    <property type="match status" value="1"/>
</dbReference>
<dbReference type="NCBIfam" id="TIGR01347">
    <property type="entry name" value="sucB"/>
    <property type="match status" value="1"/>
</dbReference>
<dbReference type="PANTHER" id="PTHR43416:SF5">
    <property type="entry name" value="DIHYDROLIPOYLLYSINE-RESIDUE SUCCINYLTRANSFERASE COMPONENT OF 2-OXOGLUTARATE DEHYDROGENASE COMPLEX, MITOCHONDRIAL"/>
    <property type="match status" value="1"/>
</dbReference>
<dbReference type="PANTHER" id="PTHR43416">
    <property type="entry name" value="DIHYDROLIPOYLLYSINE-RESIDUE SUCCINYLTRANSFERASE COMPONENT OF 2-OXOGLUTARATE DEHYDROGENASE COMPLEX, MITOCHONDRIAL-RELATED"/>
    <property type="match status" value="1"/>
</dbReference>
<dbReference type="Pfam" id="PF00198">
    <property type="entry name" value="2-oxoacid_dh"/>
    <property type="match status" value="1"/>
</dbReference>
<dbReference type="Pfam" id="PF00364">
    <property type="entry name" value="Biotin_lipoyl"/>
    <property type="match status" value="1"/>
</dbReference>
<dbReference type="Pfam" id="PF02817">
    <property type="entry name" value="E3_binding"/>
    <property type="match status" value="1"/>
</dbReference>
<dbReference type="SUPFAM" id="SSF52777">
    <property type="entry name" value="CoA-dependent acyltransferases"/>
    <property type="match status" value="1"/>
</dbReference>
<dbReference type="SUPFAM" id="SSF47005">
    <property type="entry name" value="Peripheral subunit-binding domain of 2-oxo acid dehydrogenase complex"/>
    <property type="match status" value="1"/>
</dbReference>
<dbReference type="SUPFAM" id="SSF51230">
    <property type="entry name" value="Single hybrid motif"/>
    <property type="match status" value="1"/>
</dbReference>
<dbReference type="PROSITE" id="PS50968">
    <property type="entry name" value="BIOTINYL_LIPOYL"/>
    <property type="match status" value="1"/>
</dbReference>
<dbReference type="PROSITE" id="PS00189">
    <property type="entry name" value="LIPOYL"/>
    <property type="match status" value="1"/>
</dbReference>
<dbReference type="PROSITE" id="PS51826">
    <property type="entry name" value="PSBD"/>
    <property type="match status" value="1"/>
</dbReference>
<sequence>MAIVDVKVPQLSESVAEATMLNWKKKPGEAVAQDEILIEIETDKVVLEVPAPSAGVLSIIVKNDGDTVVADEIIAKIDTEATAGAAAPAAAAPAPAAAAPAPAAAVAAPAAAGGVAMPSAAKLMAEAGLSAGQVAGTGKDGRITKGDALAAAAAPAAKAAPAPAAAKPALQQVSAPVDFAALGDRPEERVPMSRLRARIAERLLQSQSTNAILTTFNEVNMKPVMDLRNKYKDRFEKEHGVKLGFMSFFVKAAVHALKKFPLINASIDGNDIVYHGYFDIGIAVGSPRGLVVPILRNADQMSLADIEKKIAEFGVKARDGKLSLEELTGGTFSISNGGVFGSMLSTPIINPPQSAILGVHATKDRPVVEDGQIVIRPMNYLAMSYDHRIIDGREAVLGLVAMKDALEDPARLLLDL</sequence>
<reference key="1">
    <citation type="journal article" date="1996" name="FEMS Microbiol. Lett.">
        <title>Cloning and characterization of the Alcaligenes eutrophus 2-oxoglutarate dehydrogenase complex.</title>
        <authorList>
            <person name="Hein S."/>
            <person name="Steinbuechel A."/>
        </authorList>
    </citation>
    <scope>NUCLEOTIDE SEQUENCE [GENOMIC DNA]</scope>
</reference>
<reference key="2">
    <citation type="journal article" date="2006" name="Nat. Biotechnol.">
        <title>Genome sequence of the bioplastic-producing 'Knallgas' bacterium Ralstonia eutropha H16.</title>
        <authorList>
            <person name="Pohlmann A."/>
            <person name="Fricke W.F."/>
            <person name="Reinecke F."/>
            <person name="Kusian B."/>
            <person name="Liesegang H."/>
            <person name="Cramm R."/>
            <person name="Eitinger T."/>
            <person name="Ewering C."/>
            <person name="Poetter M."/>
            <person name="Schwartz E."/>
            <person name="Strittmatter A."/>
            <person name="Voss I."/>
            <person name="Gottschalk G."/>
            <person name="Steinbuechel A."/>
            <person name="Friedrich B."/>
            <person name="Bowien B."/>
        </authorList>
    </citation>
    <scope>NUCLEOTIDE SEQUENCE [LARGE SCALE GENOMIC DNA]</scope>
    <source>
        <strain>ATCC 17699 / DSM 428 / KCTC 22496 / NCIMB 10442 / H16 / Stanier 337</strain>
    </source>
</reference>
<keyword id="KW-0012">Acyltransferase</keyword>
<keyword id="KW-0450">Lipoyl</keyword>
<keyword id="KW-1185">Reference proteome</keyword>
<keyword id="KW-0808">Transferase</keyword>
<keyword id="KW-0816">Tricarboxylic acid cycle</keyword>
<organism>
    <name type="scientific">Cupriavidus necator (strain ATCC 17699 / DSM 428 / KCTC 22496 / NCIMB 10442 / H16 / Stanier 337)</name>
    <name type="common">Ralstonia eutropha</name>
    <dbReference type="NCBI Taxonomy" id="381666"/>
    <lineage>
        <taxon>Bacteria</taxon>
        <taxon>Pseudomonadati</taxon>
        <taxon>Pseudomonadota</taxon>
        <taxon>Betaproteobacteria</taxon>
        <taxon>Burkholderiales</taxon>
        <taxon>Burkholderiaceae</taxon>
        <taxon>Cupriavidus</taxon>
    </lineage>
</organism>
<evidence type="ECO:0000250" key="1"/>
<evidence type="ECO:0000250" key="2">
    <source>
        <dbReference type="UniProtKB" id="P0AFG6"/>
    </source>
</evidence>
<evidence type="ECO:0000255" key="3">
    <source>
        <dbReference type="PROSITE-ProRule" id="PRU01066"/>
    </source>
</evidence>
<evidence type="ECO:0000255" key="4">
    <source>
        <dbReference type="PROSITE-ProRule" id="PRU01170"/>
    </source>
</evidence>
<evidence type="ECO:0000305" key="5"/>
<comment type="function">
    <text evidence="2">E2 component of the 2-oxoglutarate dehydrogenase (OGDH) complex which catalyzes the second step in the conversion of 2-oxoglutarate to succinyl-CoA and CO(2).</text>
</comment>
<comment type="catalytic activity">
    <reaction evidence="2">
        <text>N(6)-[(R)-dihydrolipoyl]-L-lysyl-[protein] + succinyl-CoA = N(6)-[(R)-S(8)-succinyldihydrolipoyl]-L-lysyl-[protein] + CoA</text>
        <dbReference type="Rhea" id="RHEA:15213"/>
        <dbReference type="Rhea" id="RHEA-COMP:10475"/>
        <dbReference type="Rhea" id="RHEA-COMP:20092"/>
        <dbReference type="ChEBI" id="CHEBI:57287"/>
        <dbReference type="ChEBI" id="CHEBI:57292"/>
        <dbReference type="ChEBI" id="CHEBI:83100"/>
        <dbReference type="ChEBI" id="CHEBI:83120"/>
        <dbReference type="EC" id="2.3.1.61"/>
    </reaction>
</comment>
<comment type="cofactor">
    <cofactor evidence="1">
        <name>(R)-lipoate</name>
        <dbReference type="ChEBI" id="CHEBI:83088"/>
    </cofactor>
    <text evidence="1">Binds 1 lipoyl cofactor covalently.</text>
</comment>
<comment type="pathway">
    <text>Amino-acid degradation; L-lysine degradation via saccharopine pathway; glutaryl-CoA from L-lysine: step 6/6.</text>
</comment>
<comment type="subunit">
    <text evidence="2">Forms a 24-polypeptide structural core with octahedral symmetry. Part of the 2-oxoglutarate dehydrogenase (OGDH) complex composed of E1 (2-oxoglutarate dehydrogenase), E2 (dihydrolipoamide succinyltransferase) and E3 (dihydrolipoamide dehydrogenase); the complex contains multiple copies of the three enzymatic components (E1, E2 and E3).</text>
</comment>
<comment type="similarity">
    <text evidence="5">Belongs to the 2-oxoacid dehydrogenase family.</text>
</comment>